<evidence type="ECO:0000255" key="1">
    <source>
        <dbReference type="HAMAP-Rule" id="MF_01698"/>
    </source>
</evidence>
<reference key="1">
    <citation type="journal article" date="2003" name="Proc. Natl. Acad. Sci. U.S.A.">
        <title>The complete genome sequence of Mycobacterium bovis.</title>
        <authorList>
            <person name="Garnier T."/>
            <person name="Eiglmeier K."/>
            <person name="Camus J.-C."/>
            <person name="Medina N."/>
            <person name="Mansoor H."/>
            <person name="Pryor M."/>
            <person name="Duthoy S."/>
            <person name="Grondin S."/>
            <person name="Lacroix C."/>
            <person name="Monsempe C."/>
            <person name="Simon S."/>
            <person name="Harris B."/>
            <person name="Atkin R."/>
            <person name="Doggett J."/>
            <person name="Mayes R."/>
            <person name="Keating L."/>
            <person name="Wheeler P.R."/>
            <person name="Parkhill J."/>
            <person name="Barrell B.G."/>
            <person name="Cole S.T."/>
            <person name="Gordon S.V."/>
            <person name="Hewinson R.G."/>
        </authorList>
    </citation>
    <scope>NUCLEOTIDE SEQUENCE [LARGE SCALE GENOMIC DNA]</scope>
    <source>
        <strain>ATCC BAA-935 / AF2122/97</strain>
    </source>
</reference>
<reference key="2">
    <citation type="journal article" date="2017" name="Genome Announc.">
        <title>Updated reference genome sequence and annotation of Mycobacterium bovis AF2122/97.</title>
        <authorList>
            <person name="Malone K.M."/>
            <person name="Farrell D."/>
            <person name="Stuber T.P."/>
            <person name="Schubert O.T."/>
            <person name="Aebersold R."/>
            <person name="Robbe-Austerman S."/>
            <person name="Gordon S.V."/>
        </authorList>
    </citation>
    <scope>NUCLEOTIDE SEQUENCE [LARGE SCALE GENOMIC DNA]</scope>
    <scope>GENOME REANNOTATION</scope>
    <source>
        <strain>ATCC BAA-935 / AF2122/97</strain>
    </source>
</reference>
<comment type="function">
    <text evidence="1">Catalyzes the transfer of acetyl from acetyl-CoA to desacetylmycothiol (Cys-GlcN-Ins) to form mycothiol.</text>
</comment>
<comment type="catalytic activity">
    <reaction evidence="1">
        <text>1D-myo-inositol 2-(L-cysteinylamino)-2-deoxy-alpha-D-glucopyranoside + acetyl-CoA = mycothiol + CoA + H(+)</text>
        <dbReference type="Rhea" id="RHEA:26172"/>
        <dbReference type="ChEBI" id="CHEBI:15378"/>
        <dbReference type="ChEBI" id="CHEBI:16768"/>
        <dbReference type="ChEBI" id="CHEBI:57287"/>
        <dbReference type="ChEBI" id="CHEBI:57288"/>
        <dbReference type="ChEBI" id="CHEBI:58887"/>
        <dbReference type="EC" id="2.3.1.189"/>
    </reaction>
</comment>
<comment type="subunit">
    <text evidence="1">Monomer.</text>
</comment>
<comment type="similarity">
    <text evidence="1">Belongs to the acetyltransferase family. MshD subfamily.</text>
</comment>
<accession>Q7U173</accession>
<accession>A0A1R3XWI5</accession>
<accession>X2BFZ8</accession>
<keyword id="KW-0012">Acyltransferase</keyword>
<keyword id="KW-1185">Reference proteome</keyword>
<keyword id="KW-0677">Repeat</keyword>
<keyword id="KW-0808">Transferase</keyword>
<name>MSHD_MYCBO</name>
<gene>
    <name evidence="1" type="primary">mshD</name>
    <name type="ordered locus">BQ2027_MB0842</name>
</gene>
<dbReference type="EC" id="2.3.1.189" evidence="1"/>
<dbReference type="EMBL" id="LT708304">
    <property type="protein sequence ID" value="SIT99441.1"/>
    <property type="molecule type" value="Genomic_DNA"/>
</dbReference>
<dbReference type="RefSeq" id="NP_854500.1">
    <property type="nucleotide sequence ID" value="NC_002945.3"/>
</dbReference>
<dbReference type="RefSeq" id="WP_003404307.1">
    <property type="nucleotide sequence ID" value="NC_002945.4"/>
</dbReference>
<dbReference type="SMR" id="Q7U173"/>
<dbReference type="KEGG" id="mbo:BQ2027_MB0842"/>
<dbReference type="PATRIC" id="fig|233413.5.peg.915"/>
<dbReference type="Proteomes" id="UP000001419">
    <property type="component" value="Chromosome"/>
</dbReference>
<dbReference type="GO" id="GO:0035447">
    <property type="term" value="F:mycothiol synthase activity"/>
    <property type="evidence" value="ECO:0007669"/>
    <property type="project" value="UniProtKB-UniRule"/>
</dbReference>
<dbReference type="GO" id="GO:0008999">
    <property type="term" value="F:protein-N-terminal-alanine acetyltransferase activity"/>
    <property type="evidence" value="ECO:0007669"/>
    <property type="project" value="TreeGrafter"/>
</dbReference>
<dbReference type="GO" id="GO:0010125">
    <property type="term" value="P:mycothiol biosynthetic process"/>
    <property type="evidence" value="ECO:0007669"/>
    <property type="project" value="UniProtKB-UniRule"/>
</dbReference>
<dbReference type="CDD" id="cd04301">
    <property type="entry name" value="NAT_SF"/>
    <property type="match status" value="2"/>
</dbReference>
<dbReference type="FunFam" id="3.40.630.30:FF:000089">
    <property type="entry name" value="Mycothiol acetyltransferase"/>
    <property type="match status" value="1"/>
</dbReference>
<dbReference type="Gene3D" id="3.40.630.30">
    <property type="match status" value="1"/>
</dbReference>
<dbReference type="HAMAP" id="MF_01698">
    <property type="entry name" value="MshD"/>
    <property type="match status" value="1"/>
</dbReference>
<dbReference type="InterPro" id="IPR016181">
    <property type="entry name" value="Acyl_CoA_acyltransferase"/>
</dbReference>
<dbReference type="InterPro" id="IPR000182">
    <property type="entry name" value="GNAT_dom"/>
</dbReference>
<dbReference type="InterPro" id="IPR050276">
    <property type="entry name" value="MshD_Acetyltransferase"/>
</dbReference>
<dbReference type="InterPro" id="IPR017813">
    <property type="entry name" value="Mycothiol_AcTrfase"/>
</dbReference>
<dbReference type="NCBIfam" id="TIGR03448">
    <property type="entry name" value="mycothiol_MshD"/>
    <property type="match status" value="1"/>
</dbReference>
<dbReference type="PANTHER" id="PTHR43617">
    <property type="entry name" value="L-AMINO ACID N-ACETYLTRANSFERASE"/>
    <property type="match status" value="1"/>
</dbReference>
<dbReference type="PANTHER" id="PTHR43617:SF31">
    <property type="entry name" value="MYCOTHIOL ACETYLTRANSFERASE"/>
    <property type="match status" value="1"/>
</dbReference>
<dbReference type="Pfam" id="PF00583">
    <property type="entry name" value="Acetyltransf_1"/>
    <property type="match status" value="2"/>
</dbReference>
<dbReference type="PIRSF" id="PIRSF021524">
    <property type="entry name" value="MSH_acetyltransferase"/>
    <property type="match status" value="1"/>
</dbReference>
<dbReference type="SUPFAM" id="SSF55729">
    <property type="entry name" value="Acyl-CoA N-acyltransferases (Nat)"/>
    <property type="match status" value="1"/>
</dbReference>
<dbReference type="PROSITE" id="PS51186">
    <property type="entry name" value="GNAT"/>
    <property type="match status" value="2"/>
</dbReference>
<proteinExistence type="inferred from homology"/>
<organism>
    <name type="scientific">Mycobacterium bovis (strain ATCC BAA-935 / AF2122/97)</name>
    <dbReference type="NCBI Taxonomy" id="233413"/>
    <lineage>
        <taxon>Bacteria</taxon>
        <taxon>Bacillati</taxon>
        <taxon>Actinomycetota</taxon>
        <taxon>Actinomycetes</taxon>
        <taxon>Mycobacteriales</taxon>
        <taxon>Mycobacteriaceae</taxon>
        <taxon>Mycobacterium</taxon>
        <taxon>Mycobacterium tuberculosis complex</taxon>
    </lineage>
</organism>
<feature type="chain" id="PRO_0000400268" description="Mycothiol acetyltransferase">
    <location>
        <begin position="1"/>
        <end position="315"/>
    </location>
</feature>
<feature type="domain" description="N-acetyltransferase 1" evidence="1">
    <location>
        <begin position="4"/>
        <end position="141"/>
    </location>
</feature>
<feature type="domain" description="N-acetyltransferase 2" evidence="1">
    <location>
        <begin position="152"/>
        <end position="315"/>
    </location>
</feature>
<feature type="binding site" evidence="1">
    <location>
        <position position="36"/>
    </location>
    <ligand>
        <name>1D-myo-inositol 2-(L-cysteinylamino)-2-deoxy-alpha-D-glucopyranoside</name>
        <dbReference type="ChEBI" id="CHEBI:58887"/>
    </ligand>
</feature>
<feature type="binding site" evidence="1">
    <location>
        <begin position="80"/>
        <end position="82"/>
    </location>
    <ligand>
        <name>acetyl-CoA</name>
        <dbReference type="ChEBI" id="CHEBI:57288"/>
        <label>1</label>
    </ligand>
</feature>
<feature type="binding site" evidence="1">
    <location>
        <begin position="88"/>
        <end position="93"/>
    </location>
    <ligand>
        <name>acetyl-CoA</name>
        <dbReference type="ChEBI" id="CHEBI:57288"/>
        <label>1</label>
    </ligand>
</feature>
<feature type="binding site" evidence="1">
    <location>
        <position position="179"/>
    </location>
    <ligand>
        <name>1D-myo-inositol 2-(L-cysteinylamino)-2-deoxy-alpha-D-glucopyranoside</name>
        <dbReference type="ChEBI" id="CHEBI:58887"/>
    </ligand>
</feature>
<feature type="binding site" evidence="1">
    <location>
        <position position="224"/>
    </location>
    <ligand>
        <name>1D-myo-inositol 2-(L-cysteinylamino)-2-deoxy-alpha-D-glucopyranoside</name>
        <dbReference type="ChEBI" id="CHEBI:58887"/>
    </ligand>
</feature>
<feature type="binding site" evidence="1">
    <location>
        <position position="234"/>
    </location>
    <ligand>
        <name>1D-myo-inositol 2-(L-cysteinylamino)-2-deoxy-alpha-D-glucopyranoside</name>
        <dbReference type="ChEBI" id="CHEBI:58887"/>
    </ligand>
</feature>
<feature type="binding site" evidence="1">
    <location>
        <begin position="238"/>
        <end position="240"/>
    </location>
    <ligand>
        <name>acetyl-CoA</name>
        <dbReference type="ChEBI" id="CHEBI:57288"/>
        <label>2</label>
    </ligand>
</feature>
<feature type="binding site" evidence="1">
    <location>
        <begin position="245"/>
        <end position="251"/>
    </location>
    <ligand>
        <name>acetyl-CoA</name>
        <dbReference type="ChEBI" id="CHEBI:57288"/>
        <label>2</label>
    </ligand>
</feature>
<feature type="binding site" evidence="1">
    <location>
        <position position="282"/>
    </location>
    <ligand>
        <name>1D-myo-inositol 2-(L-cysteinylamino)-2-deoxy-alpha-D-glucopyranoside</name>
        <dbReference type="ChEBI" id="CHEBI:58887"/>
    </ligand>
</feature>
<feature type="binding site" evidence="1">
    <location>
        <begin position="287"/>
        <end position="292"/>
    </location>
    <ligand>
        <name>acetyl-CoA</name>
        <dbReference type="ChEBI" id="CHEBI:57288"/>
        <label>2</label>
    </ligand>
</feature>
<protein>
    <recommendedName>
        <fullName evidence="1">Mycothiol acetyltransferase</fullName>
        <shortName evidence="1">MSH acetyltransferase</shortName>
        <ecNumber evidence="1">2.3.1.189</ecNumber>
    </recommendedName>
    <alternativeName>
        <fullName evidence="1">Mycothiol synthase</fullName>
    </alternativeName>
</protein>
<sequence>MTALDWRSALTADEQRSVRALVTATTAVDGVAPVGEQVLRELGQQRTEHLLVAGSRPGGPIIGYLNLSPPRGAGGAMAELVVHPQSRRRGIGTAMARAALAKTAGRNQFWAHGTLDPARATASALGLVGVRELIQMRRPLRDIPEPTIPDGVVIRTYAGTSDDAELLRVNNAAFAGHPEQGGWTAVQLAERRGEAWFDPDGLILAFGDSPRERPGRLLGFHWTKVHPDHPGLGEVYVLGVDPAAQRRGLGQMLTSIGIVSLARRLGGRKTLDPAVEPAVLLYVESDNVAAVRTYQSLGFTTYSVDTAYALAGTDN</sequence>